<proteinExistence type="evidence at transcript level"/>
<feature type="chain" id="PRO_0000235893" description="Chaperone Ric-8A">
    <location>
        <begin position="1"/>
        <end position="530"/>
    </location>
</feature>
<feature type="modified residue" description="Phosphoserine" evidence="3">
    <location>
        <position position="435"/>
    </location>
</feature>
<feature type="modified residue" description="Phosphothreonine" evidence="3">
    <location>
        <position position="440"/>
    </location>
</feature>
<feature type="modified residue" description="Phosphothreonine" evidence="1">
    <location>
        <position position="442"/>
    </location>
</feature>
<feature type="modified residue" description="Phosphoserine" evidence="3">
    <location>
        <position position="501"/>
    </location>
</feature>
<feature type="modified residue" description="Phosphoserine" evidence="3">
    <location>
        <position position="522"/>
    </location>
</feature>
<feature type="modified residue" description="Phosphoserine" evidence="3">
    <location>
        <position position="523"/>
    </location>
</feature>
<feature type="modified residue" description="Phosphoserine" evidence="3">
    <location>
        <position position="527"/>
    </location>
</feature>
<accession>Q5R8F5</accession>
<organism>
    <name type="scientific">Pongo abelii</name>
    <name type="common">Sumatran orangutan</name>
    <name type="synonym">Pongo pygmaeus abelii</name>
    <dbReference type="NCBI Taxonomy" id="9601"/>
    <lineage>
        <taxon>Eukaryota</taxon>
        <taxon>Metazoa</taxon>
        <taxon>Chordata</taxon>
        <taxon>Craniata</taxon>
        <taxon>Vertebrata</taxon>
        <taxon>Euteleostomi</taxon>
        <taxon>Mammalia</taxon>
        <taxon>Eutheria</taxon>
        <taxon>Euarchontoglires</taxon>
        <taxon>Primates</taxon>
        <taxon>Haplorrhini</taxon>
        <taxon>Catarrhini</taxon>
        <taxon>Hominidae</taxon>
        <taxon>Pongo</taxon>
    </lineage>
</organism>
<dbReference type="EMBL" id="CR859797">
    <property type="protein sequence ID" value="CAH91955.1"/>
    <property type="molecule type" value="mRNA"/>
</dbReference>
<dbReference type="RefSeq" id="NP_001126134.1">
    <property type="nucleotide sequence ID" value="NM_001132662.1"/>
</dbReference>
<dbReference type="SMR" id="Q5R8F5"/>
<dbReference type="FunCoup" id="Q5R8F5">
    <property type="interactions" value="2626"/>
</dbReference>
<dbReference type="STRING" id="9601.ENSPPYP00000022354"/>
<dbReference type="GeneID" id="100173091"/>
<dbReference type="KEGG" id="pon:100173091"/>
<dbReference type="CTD" id="60626"/>
<dbReference type="eggNOG" id="KOG4464">
    <property type="taxonomic scope" value="Eukaryota"/>
</dbReference>
<dbReference type="HOGENOM" id="CLU_018602_1_0_1"/>
<dbReference type="InParanoid" id="Q5R8F5"/>
<dbReference type="OrthoDB" id="5585685at2759"/>
<dbReference type="TreeFam" id="TF314907"/>
<dbReference type="Proteomes" id="UP000001595">
    <property type="component" value="Unplaced"/>
</dbReference>
<dbReference type="GO" id="GO:0005938">
    <property type="term" value="C:cell cortex"/>
    <property type="evidence" value="ECO:0007669"/>
    <property type="project" value="UniProtKB-SubCell"/>
</dbReference>
<dbReference type="GO" id="GO:0005737">
    <property type="term" value="C:cytoplasm"/>
    <property type="evidence" value="ECO:0000250"/>
    <property type="project" value="UniProtKB"/>
</dbReference>
<dbReference type="GO" id="GO:0005886">
    <property type="term" value="C:plasma membrane"/>
    <property type="evidence" value="ECO:0000250"/>
    <property type="project" value="UniProtKB"/>
</dbReference>
<dbReference type="GO" id="GO:0001965">
    <property type="term" value="F:G-protein alpha-subunit binding"/>
    <property type="evidence" value="ECO:0000250"/>
    <property type="project" value="UniProtKB"/>
</dbReference>
<dbReference type="GO" id="GO:0005085">
    <property type="term" value="F:guanyl-nucleotide exchange factor activity"/>
    <property type="evidence" value="ECO:0000250"/>
    <property type="project" value="UniProtKB"/>
</dbReference>
<dbReference type="GO" id="GO:0044183">
    <property type="term" value="F:protein folding chaperone"/>
    <property type="evidence" value="ECO:0000250"/>
    <property type="project" value="UniProtKB"/>
</dbReference>
<dbReference type="GO" id="GO:0007186">
    <property type="term" value="P:G protein-coupled receptor signaling pathway"/>
    <property type="evidence" value="ECO:0000250"/>
    <property type="project" value="UniProtKB"/>
</dbReference>
<dbReference type="FunFam" id="1.25.10.10:FF:000447">
    <property type="entry name" value="RIC8 guanine nucleotide exchange factor A"/>
    <property type="match status" value="1"/>
</dbReference>
<dbReference type="Gene3D" id="1.25.10.10">
    <property type="entry name" value="Leucine-rich Repeat Variant"/>
    <property type="match status" value="1"/>
</dbReference>
<dbReference type="InterPro" id="IPR011989">
    <property type="entry name" value="ARM-like"/>
</dbReference>
<dbReference type="InterPro" id="IPR016024">
    <property type="entry name" value="ARM-type_fold"/>
</dbReference>
<dbReference type="InterPro" id="IPR008376">
    <property type="entry name" value="Chaperone_Ric-8_A/B"/>
</dbReference>
<dbReference type="InterPro" id="IPR019318">
    <property type="entry name" value="Gua_nucleotide_exch_fac_Ric8"/>
</dbReference>
<dbReference type="PANTHER" id="PTHR12425">
    <property type="entry name" value="SYNEMBRYN"/>
    <property type="match status" value="1"/>
</dbReference>
<dbReference type="PANTHER" id="PTHR12425:SF4">
    <property type="entry name" value="SYNEMBRYN-A"/>
    <property type="match status" value="1"/>
</dbReference>
<dbReference type="Pfam" id="PF10165">
    <property type="entry name" value="Ric8"/>
    <property type="match status" value="1"/>
</dbReference>
<dbReference type="PRINTS" id="PR01802">
    <property type="entry name" value="SYNEMBRYN"/>
</dbReference>
<dbReference type="SUPFAM" id="SSF48371">
    <property type="entry name" value="ARM repeat"/>
    <property type="match status" value="1"/>
</dbReference>
<protein>
    <recommendedName>
        <fullName>Chaperone Ric-8A</fullName>
    </recommendedName>
    <alternativeName>
        <fullName>Synembryn-A</fullName>
    </alternativeName>
</protein>
<keyword id="KW-0143">Chaperone</keyword>
<keyword id="KW-0963">Cytoplasm</keyword>
<keyword id="KW-0344">Guanine-nucleotide releasing factor</keyword>
<keyword id="KW-0597">Phosphoprotein</keyword>
<keyword id="KW-1185">Reference proteome</keyword>
<gene>
    <name type="primary">RIC8A</name>
</gene>
<name>RIC8A_PONAB</name>
<reference key="1">
    <citation type="submission" date="2004-11" db="EMBL/GenBank/DDBJ databases">
        <authorList>
            <consortium name="The German cDNA consortium"/>
        </authorList>
    </citation>
    <scope>NUCLEOTIDE SEQUENCE [LARGE SCALE MRNA]</scope>
    <source>
        <tissue>Heart</tissue>
    </source>
</reference>
<comment type="function">
    <text evidence="2 3">Chaperone that specifically binds and folds nascent G alpha proteins prior to G protein heterotrimer formation, promoting their stability and activity: folds GNAI1, GNAO1, GNA13 and GNAQ. Does not fold G(s) G-alpha proteins GNAS nor GNAL. Also acts as a guanine nucleotide exchange factor (GEF) for G alpha proteins by stimulating exchange of bound GDP for free GTP. Involved in regulation of microtubule pulling forces during mitotic movement of chromosomes by stimulating G(i)-alpha protein (GNAI1), possibly leading to release G(i)-alpha-GTP and NuMA proteins from the NuMA-GPSM2-G(i)-alpha-GDP complex (By similarity). Also acts as an activator for G(q)-alpha (GNAQ) protein by enhancing the G(q)-coupled receptor-mediated ERK activation (By similarity).</text>
</comment>
<comment type="subunit">
    <text evidence="2 3">Interacts with GDP-bound G alpha proteins GNAI1, GNAO1 and GNAQ, and with GNA13 with lower affinity. Does not interact with G-alpha proteins when they are in complex with subunits beta and gamma. Interacts (via C-terminus) with RGS14; the interaction stimulates the dissociation of the complex between RGS14 and the active GTP-bound form of GNAI1 (By similarity). Interacts with NCS1; interaction is favored in the absence of Ca(2+) and myristoylation of NCS1 is not required (By similarity).</text>
</comment>
<comment type="subcellular location">
    <subcellularLocation>
        <location evidence="2">Cytoplasm</location>
        <location evidence="2">Cell cortex</location>
    </subcellularLocation>
    <subcellularLocation>
        <location evidence="2">Cytoplasm</location>
    </subcellularLocation>
</comment>
<comment type="PTM">
    <text evidence="2">Phosphorylated at Ser-435 and Thr-440 by CK2, stabilizing its interface with G alpha proteins.</text>
</comment>
<comment type="similarity">
    <text evidence="4">Belongs to the synembryn family.</text>
</comment>
<evidence type="ECO:0000250" key="1">
    <source>
        <dbReference type="UniProtKB" id="Q3TIR3"/>
    </source>
</evidence>
<evidence type="ECO:0000250" key="2">
    <source>
        <dbReference type="UniProtKB" id="Q80ZG1"/>
    </source>
</evidence>
<evidence type="ECO:0000250" key="3">
    <source>
        <dbReference type="UniProtKB" id="Q9NPQ8"/>
    </source>
</evidence>
<evidence type="ECO:0000305" key="4"/>
<sequence length="530" mass="59695">MEPRTVAEAVETGKEDVIMEALRSYNQEHSQSFTFDDAQQEDRKRLAELLVSVLEQGLPPSHRVTWLQSVRILSRDHNCLDPFTSRQSLQALACYADISVSEGSVPESPDMDVVLESLKCLCNLVLSSPVAQMLAAEARLVVKLTERVGLYRERSFPHDVQFFDLRLLFLLTALRTDVRQQLFQELKGVRLLTDTLELTLGVTPEGNPPKLLPSQETERAMEILKVLFNITLDSIKGEVDEEDAALYRHLGTLLRHCVMIATAGDRTEEFHGHAVNLLGNLPLKCLDVLFTLEPHGDSVEFMGVNMDVIRALLIFLEKRLHQTHRLKESVAPVLSVLTECARMHRPARKFLKAQVLPPLRDVRTRPEVGEMLRNKLVRLMTHLDTDVKRVAAEFLFVLCSESVPRFIKYTGYGNAAGLLAARGLMAGGRPEGQYSEDEDTDTDEYKEAKASINPVTGRVEEKPPNPMEGMTEEQKEHEAMKLVTMFDKLSRNRVIQPMGMSPRGHLTSLQDAMCETMEQQLSSDPDSDPD</sequence>